<evidence type="ECO:0000255" key="1">
    <source>
        <dbReference type="HAMAP-Rule" id="MF_00154"/>
    </source>
</evidence>
<evidence type="ECO:0000305" key="2"/>
<feature type="chain" id="PRO_0000346085" description="Protoheme IX farnesyltransferase">
    <location>
        <begin position="1"/>
        <end position="281"/>
    </location>
</feature>
<feature type="transmembrane region" description="Helical" evidence="1">
    <location>
        <begin position="13"/>
        <end position="33"/>
    </location>
</feature>
<feature type="transmembrane region" description="Helical" evidence="1">
    <location>
        <begin position="38"/>
        <end position="58"/>
    </location>
</feature>
<feature type="transmembrane region" description="Helical" evidence="1">
    <location>
        <begin position="85"/>
        <end position="105"/>
    </location>
</feature>
<feature type="transmembrane region" description="Helical" evidence="1">
    <location>
        <begin position="107"/>
        <end position="127"/>
    </location>
</feature>
<feature type="transmembrane region" description="Helical" evidence="1">
    <location>
        <begin position="132"/>
        <end position="152"/>
    </location>
</feature>
<feature type="transmembrane region" description="Helical" evidence="1">
    <location>
        <begin position="161"/>
        <end position="181"/>
    </location>
</feature>
<feature type="transmembrane region" description="Helical" evidence="1">
    <location>
        <begin position="206"/>
        <end position="226"/>
    </location>
</feature>
<feature type="transmembrane region" description="Helical" evidence="1">
    <location>
        <begin position="227"/>
        <end position="247"/>
    </location>
</feature>
<feature type="transmembrane region" description="Helical" evidence="1">
    <location>
        <begin position="261"/>
        <end position="281"/>
    </location>
</feature>
<protein>
    <recommendedName>
        <fullName evidence="1">Protoheme IX farnesyltransferase</fullName>
        <ecNumber evidence="1">2.5.1.141</ecNumber>
    </recommendedName>
    <alternativeName>
        <fullName evidence="1">Heme B farnesyltransferase</fullName>
    </alternativeName>
    <alternativeName>
        <fullName evidence="1">Heme O synthase</fullName>
    </alternativeName>
</protein>
<keyword id="KW-1003">Cell membrane</keyword>
<keyword id="KW-0350">Heme biosynthesis</keyword>
<keyword id="KW-0472">Membrane</keyword>
<keyword id="KW-1185">Reference proteome</keyword>
<keyword id="KW-0808">Transferase</keyword>
<keyword id="KW-0812">Transmembrane</keyword>
<keyword id="KW-1133">Transmembrane helix</keyword>
<sequence>MINEYLKLMKPHVIWLLVLSALVGYIAAAGPLVNPIKLIELTVVGFLSTGGSAAFNMYYERDIDSLMVRTMKRPIPSGKVTPLNALTFSIAVSLSGFTLSYLWLGSWVTLMIALGWFFYAVLYTIMLKRRTWLNIVIGGFAGNAALLSGWIMAKPIDLESILLSMVIYVWIPAHIWSLAYYARDDYKRVNVPMLPTMVNEKASVRIISILNLVSIIYMLVLYQLYMAKLIGYILVIPATLAGIIVTIKALIKPSNESFRTMFKATSPILLLFLLAVIISRI</sequence>
<organism>
    <name type="scientific">Caldivirga maquilingensis (strain ATCC 700844 / DSM 13496 / JCM 10307 / IC-167)</name>
    <dbReference type="NCBI Taxonomy" id="397948"/>
    <lineage>
        <taxon>Archaea</taxon>
        <taxon>Thermoproteota</taxon>
        <taxon>Thermoprotei</taxon>
        <taxon>Thermoproteales</taxon>
        <taxon>Thermoproteaceae</taxon>
        <taxon>Caldivirga</taxon>
    </lineage>
</organism>
<gene>
    <name evidence="1" type="primary">ctaB</name>
    <name type="ordered locus">Cmaq_0520</name>
</gene>
<accession>A8MC59</accession>
<dbReference type="EC" id="2.5.1.141" evidence="1"/>
<dbReference type="EMBL" id="CP000852">
    <property type="protein sequence ID" value="ABW01365.1"/>
    <property type="status" value="ALT_INIT"/>
    <property type="molecule type" value="Genomic_DNA"/>
</dbReference>
<dbReference type="SMR" id="A8MC59"/>
<dbReference type="STRING" id="397948.Cmaq_0520"/>
<dbReference type="KEGG" id="cma:Cmaq_0520"/>
<dbReference type="eggNOG" id="arCOG00479">
    <property type="taxonomic scope" value="Archaea"/>
</dbReference>
<dbReference type="HOGENOM" id="CLU_029631_0_1_2"/>
<dbReference type="OrthoDB" id="131615at2157"/>
<dbReference type="UniPathway" id="UPA00834">
    <property type="reaction ID" value="UER00712"/>
</dbReference>
<dbReference type="Proteomes" id="UP000001137">
    <property type="component" value="Chromosome"/>
</dbReference>
<dbReference type="GO" id="GO:0005886">
    <property type="term" value="C:plasma membrane"/>
    <property type="evidence" value="ECO:0007669"/>
    <property type="project" value="UniProtKB-SubCell"/>
</dbReference>
<dbReference type="GO" id="GO:0008495">
    <property type="term" value="F:protoheme IX farnesyltransferase activity"/>
    <property type="evidence" value="ECO:0007669"/>
    <property type="project" value="UniProtKB-UniRule"/>
</dbReference>
<dbReference type="GO" id="GO:0048034">
    <property type="term" value="P:heme O biosynthetic process"/>
    <property type="evidence" value="ECO:0007669"/>
    <property type="project" value="UniProtKB-UniRule"/>
</dbReference>
<dbReference type="CDD" id="cd13957">
    <property type="entry name" value="PT_UbiA_Cox10"/>
    <property type="match status" value="1"/>
</dbReference>
<dbReference type="Gene3D" id="1.10.357.140">
    <property type="entry name" value="UbiA prenyltransferase"/>
    <property type="match status" value="1"/>
</dbReference>
<dbReference type="HAMAP" id="MF_00154">
    <property type="entry name" value="CyoE_CtaB"/>
    <property type="match status" value="1"/>
</dbReference>
<dbReference type="InterPro" id="IPR006369">
    <property type="entry name" value="Protohaem_IX_farnesylTrfase"/>
</dbReference>
<dbReference type="InterPro" id="IPR000537">
    <property type="entry name" value="UbiA_prenyltransferase"/>
</dbReference>
<dbReference type="InterPro" id="IPR030470">
    <property type="entry name" value="UbiA_prenylTrfase_CS"/>
</dbReference>
<dbReference type="InterPro" id="IPR044878">
    <property type="entry name" value="UbiA_sf"/>
</dbReference>
<dbReference type="NCBIfam" id="TIGR01473">
    <property type="entry name" value="cyoE_ctaB"/>
    <property type="match status" value="1"/>
</dbReference>
<dbReference type="PANTHER" id="PTHR43448">
    <property type="entry name" value="PROTOHEME IX FARNESYLTRANSFERASE, MITOCHONDRIAL"/>
    <property type="match status" value="1"/>
</dbReference>
<dbReference type="PANTHER" id="PTHR43448:SF2">
    <property type="entry name" value="PROTOHEME IX FARNESYLTRANSFERASE, MITOCHONDRIAL"/>
    <property type="match status" value="1"/>
</dbReference>
<dbReference type="Pfam" id="PF01040">
    <property type="entry name" value="UbiA"/>
    <property type="match status" value="1"/>
</dbReference>
<dbReference type="PROSITE" id="PS00943">
    <property type="entry name" value="UBIA"/>
    <property type="match status" value="1"/>
</dbReference>
<proteinExistence type="inferred from homology"/>
<reference key="1">
    <citation type="submission" date="2007-10" db="EMBL/GenBank/DDBJ databases">
        <title>Complete sequence of Caldivirga maquilingensis IC-167.</title>
        <authorList>
            <consortium name="US DOE Joint Genome Institute"/>
            <person name="Copeland A."/>
            <person name="Lucas S."/>
            <person name="Lapidus A."/>
            <person name="Barry K."/>
            <person name="Glavina del Rio T."/>
            <person name="Dalin E."/>
            <person name="Tice H."/>
            <person name="Pitluck S."/>
            <person name="Saunders E."/>
            <person name="Brettin T."/>
            <person name="Bruce D."/>
            <person name="Detter J.C."/>
            <person name="Han C."/>
            <person name="Schmutz J."/>
            <person name="Larimer F."/>
            <person name="Land M."/>
            <person name="Hauser L."/>
            <person name="Kyrpides N."/>
            <person name="Ivanova N."/>
            <person name="Biddle J.F."/>
            <person name="Zhang Z."/>
            <person name="Fitz-Gibbon S.T."/>
            <person name="Lowe T.M."/>
            <person name="Saltikov C."/>
            <person name="House C.H."/>
            <person name="Richardson P."/>
        </authorList>
    </citation>
    <scope>NUCLEOTIDE SEQUENCE [LARGE SCALE GENOMIC DNA]</scope>
    <source>
        <strain>ATCC 700844 / DSM 13496 / JCM 10307 / IC-167</strain>
    </source>
</reference>
<comment type="function">
    <text evidence="1">Converts heme B (protoheme IX) to heme O by substitution of the vinyl group on carbon 2 of heme B porphyrin ring with a hydroxyethyl farnesyl side group.</text>
</comment>
<comment type="catalytic activity">
    <reaction evidence="1">
        <text>heme b + (2E,6E)-farnesyl diphosphate + H2O = Fe(II)-heme o + diphosphate</text>
        <dbReference type="Rhea" id="RHEA:28070"/>
        <dbReference type="ChEBI" id="CHEBI:15377"/>
        <dbReference type="ChEBI" id="CHEBI:33019"/>
        <dbReference type="ChEBI" id="CHEBI:60344"/>
        <dbReference type="ChEBI" id="CHEBI:60530"/>
        <dbReference type="ChEBI" id="CHEBI:175763"/>
        <dbReference type="EC" id="2.5.1.141"/>
    </reaction>
</comment>
<comment type="pathway">
    <text evidence="1">Porphyrin-containing compound metabolism; heme O biosynthesis; heme O from protoheme: step 1/1.</text>
</comment>
<comment type="subcellular location">
    <subcellularLocation>
        <location evidence="1">Cell membrane</location>
        <topology evidence="1">Multi-pass membrane protein</topology>
    </subcellularLocation>
</comment>
<comment type="miscellaneous">
    <text evidence="1">Carbon 2 of the heme B porphyrin ring is defined according to the Fischer nomenclature.</text>
</comment>
<comment type="similarity">
    <text evidence="1">Belongs to the UbiA prenyltransferase family. Protoheme IX farnesyltransferase subfamily.</text>
</comment>
<comment type="sequence caution" evidence="2">
    <conflict type="erroneous initiation">
        <sequence resource="EMBL-CDS" id="ABW01365"/>
    </conflict>
</comment>
<name>COXX_CALMQ</name>